<proteinExistence type="inferred from homology"/>
<name>PROB_SALRD</name>
<keyword id="KW-0028">Amino-acid biosynthesis</keyword>
<keyword id="KW-0067">ATP-binding</keyword>
<keyword id="KW-0963">Cytoplasm</keyword>
<keyword id="KW-0418">Kinase</keyword>
<keyword id="KW-0547">Nucleotide-binding</keyword>
<keyword id="KW-0641">Proline biosynthesis</keyword>
<keyword id="KW-1185">Reference proteome</keyword>
<keyword id="KW-0808">Transferase</keyword>
<gene>
    <name evidence="1" type="primary">proB</name>
    <name type="ordered locus">SRU_1252</name>
</gene>
<reference key="1">
    <citation type="journal article" date="2005" name="Proc. Natl. Acad. Sci. U.S.A.">
        <title>The genome of Salinibacter ruber: convergence and gene exchange among hyperhalophilic bacteria and archaea.</title>
        <authorList>
            <person name="Mongodin E.F."/>
            <person name="Nelson K.E."/>
            <person name="Daugherty S."/>
            <person name="DeBoy R.T."/>
            <person name="Wister J."/>
            <person name="Khouri H."/>
            <person name="Weidman J."/>
            <person name="Walsh D.A."/>
            <person name="Papke R.T."/>
            <person name="Sanchez Perez G."/>
            <person name="Sharma A.K."/>
            <person name="Nesbo C.L."/>
            <person name="MacLeod D."/>
            <person name="Bapteste E."/>
            <person name="Doolittle W.F."/>
            <person name="Charlebois R.L."/>
            <person name="Legault B."/>
            <person name="Rodriguez-Valera F."/>
        </authorList>
    </citation>
    <scope>NUCLEOTIDE SEQUENCE [LARGE SCALE GENOMIC DNA]</scope>
    <source>
        <strain>DSM 13855 / CECT 5946 / M31</strain>
    </source>
</reference>
<protein>
    <recommendedName>
        <fullName evidence="1">Glutamate 5-kinase</fullName>
        <ecNumber evidence="1">2.7.2.11</ecNumber>
    </recommendedName>
    <alternativeName>
        <fullName evidence="1">Gamma-glutamyl kinase</fullName>
        <shortName evidence="1">GK</shortName>
    </alternativeName>
</protein>
<organism>
    <name type="scientific">Salinibacter ruber (strain DSM 13855 / M31)</name>
    <dbReference type="NCBI Taxonomy" id="309807"/>
    <lineage>
        <taxon>Bacteria</taxon>
        <taxon>Pseudomonadati</taxon>
        <taxon>Rhodothermota</taxon>
        <taxon>Rhodothermia</taxon>
        <taxon>Rhodothermales</taxon>
        <taxon>Salinibacteraceae</taxon>
        <taxon>Salinibacter</taxon>
    </lineage>
</organism>
<evidence type="ECO:0000255" key="1">
    <source>
        <dbReference type="HAMAP-Rule" id="MF_00456"/>
    </source>
</evidence>
<accession>Q2S355</accession>
<feature type="chain" id="PRO_0000253000" description="Glutamate 5-kinase">
    <location>
        <begin position="1"/>
        <end position="376"/>
    </location>
</feature>
<feature type="domain" description="PUA" evidence="1">
    <location>
        <begin position="280"/>
        <end position="361"/>
    </location>
</feature>
<feature type="binding site" evidence="1">
    <location>
        <position position="15"/>
    </location>
    <ligand>
        <name>ATP</name>
        <dbReference type="ChEBI" id="CHEBI:30616"/>
    </ligand>
</feature>
<feature type="binding site" evidence="1">
    <location>
        <position position="55"/>
    </location>
    <ligand>
        <name>substrate</name>
    </ligand>
</feature>
<feature type="binding site" evidence="1">
    <location>
        <position position="141"/>
    </location>
    <ligand>
        <name>substrate</name>
    </ligand>
</feature>
<feature type="binding site" evidence="1">
    <location>
        <position position="153"/>
    </location>
    <ligand>
        <name>substrate</name>
    </ligand>
</feature>
<feature type="binding site" evidence="1">
    <location>
        <begin position="173"/>
        <end position="174"/>
    </location>
    <ligand>
        <name>ATP</name>
        <dbReference type="ChEBI" id="CHEBI:30616"/>
    </ligand>
</feature>
<feature type="binding site" evidence="1">
    <location>
        <begin position="215"/>
        <end position="221"/>
    </location>
    <ligand>
        <name>ATP</name>
        <dbReference type="ChEBI" id="CHEBI:30616"/>
    </ligand>
</feature>
<comment type="function">
    <text evidence="1">Catalyzes the transfer of a phosphate group to glutamate to form L-glutamate 5-phosphate.</text>
</comment>
<comment type="catalytic activity">
    <reaction evidence="1">
        <text>L-glutamate + ATP = L-glutamyl 5-phosphate + ADP</text>
        <dbReference type="Rhea" id="RHEA:14877"/>
        <dbReference type="ChEBI" id="CHEBI:29985"/>
        <dbReference type="ChEBI" id="CHEBI:30616"/>
        <dbReference type="ChEBI" id="CHEBI:58274"/>
        <dbReference type="ChEBI" id="CHEBI:456216"/>
        <dbReference type="EC" id="2.7.2.11"/>
    </reaction>
</comment>
<comment type="pathway">
    <text evidence="1">Amino-acid biosynthesis; L-proline biosynthesis; L-glutamate 5-semialdehyde from L-glutamate: step 1/2.</text>
</comment>
<comment type="subcellular location">
    <subcellularLocation>
        <location evidence="1">Cytoplasm</location>
    </subcellularLocation>
</comment>
<comment type="similarity">
    <text evidence="1">Belongs to the glutamate 5-kinase family.</text>
</comment>
<sequence>MATVALPDWTRAVVKVGSALVAPDDRGCSTTHLLPIARFVIQSRRQGKEVILVSSGAVAAGLAEQGRGGPGTGLSIPERQALAALGQPLLMAHWRRLFDVPCAQVLLTYDDLQRRARFVNAKNTIAELLDRDTLPIVNENDTVATEELRVGDNDNLAAYVAVLAEADLLVICSDVDGLYTADPHDDPDAERLPAVDAITDEIYDMVGPSHRKVATGGMQTKVEAAEKATDRGIDTVLVNGTKGGHLDALGRGEMPGTLFRQAEQPLPARKHWMLHALPSAGRLTVDAGAADALRHEGASLLPSGIVAVEGRFARGDAVEIAVEKEGNRTRVAKGITQYGAADLERIQGRQSHAIAEVLDEAPADYVVHRDDLVVEA</sequence>
<dbReference type="EC" id="2.7.2.11" evidence="1"/>
<dbReference type="EMBL" id="CP000159">
    <property type="protein sequence ID" value="ABC44492.1"/>
    <property type="molecule type" value="Genomic_DNA"/>
</dbReference>
<dbReference type="RefSeq" id="WP_011404004.1">
    <property type="nucleotide sequence ID" value="NC_007677.1"/>
</dbReference>
<dbReference type="RefSeq" id="YP_445376.1">
    <property type="nucleotide sequence ID" value="NC_007677.1"/>
</dbReference>
<dbReference type="SMR" id="Q2S355"/>
<dbReference type="STRING" id="309807.SRU_1252"/>
<dbReference type="EnsemblBacteria" id="ABC44492">
    <property type="protein sequence ID" value="ABC44492"/>
    <property type="gene ID" value="SRU_1252"/>
</dbReference>
<dbReference type="GeneID" id="83728163"/>
<dbReference type="KEGG" id="sru:SRU_1252"/>
<dbReference type="PATRIC" id="fig|309807.25.peg.1298"/>
<dbReference type="eggNOG" id="COG0263">
    <property type="taxonomic scope" value="Bacteria"/>
</dbReference>
<dbReference type="HOGENOM" id="CLU_025400_2_1_10"/>
<dbReference type="OrthoDB" id="9804434at2"/>
<dbReference type="UniPathway" id="UPA00098">
    <property type="reaction ID" value="UER00359"/>
</dbReference>
<dbReference type="Proteomes" id="UP000008674">
    <property type="component" value="Chromosome"/>
</dbReference>
<dbReference type="GO" id="GO:0005829">
    <property type="term" value="C:cytosol"/>
    <property type="evidence" value="ECO:0007669"/>
    <property type="project" value="TreeGrafter"/>
</dbReference>
<dbReference type="GO" id="GO:0005524">
    <property type="term" value="F:ATP binding"/>
    <property type="evidence" value="ECO:0007669"/>
    <property type="project" value="UniProtKB-KW"/>
</dbReference>
<dbReference type="GO" id="GO:0004349">
    <property type="term" value="F:glutamate 5-kinase activity"/>
    <property type="evidence" value="ECO:0007669"/>
    <property type="project" value="UniProtKB-UniRule"/>
</dbReference>
<dbReference type="GO" id="GO:0003723">
    <property type="term" value="F:RNA binding"/>
    <property type="evidence" value="ECO:0007669"/>
    <property type="project" value="InterPro"/>
</dbReference>
<dbReference type="GO" id="GO:0055129">
    <property type="term" value="P:L-proline biosynthetic process"/>
    <property type="evidence" value="ECO:0007669"/>
    <property type="project" value="UniProtKB-UniRule"/>
</dbReference>
<dbReference type="CDD" id="cd04242">
    <property type="entry name" value="AAK_G5K_ProB"/>
    <property type="match status" value="1"/>
</dbReference>
<dbReference type="CDD" id="cd21157">
    <property type="entry name" value="PUA_G5K"/>
    <property type="match status" value="1"/>
</dbReference>
<dbReference type="FunFam" id="2.30.130.10:FF:000007">
    <property type="entry name" value="Glutamate 5-kinase"/>
    <property type="match status" value="1"/>
</dbReference>
<dbReference type="FunFam" id="3.40.1160.10:FF:000018">
    <property type="entry name" value="Glutamate 5-kinase"/>
    <property type="match status" value="1"/>
</dbReference>
<dbReference type="Gene3D" id="3.40.1160.10">
    <property type="entry name" value="Acetylglutamate kinase-like"/>
    <property type="match status" value="1"/>
</dbReference>
<dbReference type="Gene3D" id="2.30.130.10">
    <property type="entry name" value="PUA domain"/>
    <property type="match status" value="1"/>
</dbReference>
<dbReference type="HAMAP" id="MF_00456">
    <property type="entry name" value="ProB"/>
    <property type="match status" value="1"/>
</dbReference>
<dbReference type="InterPro" id="IPR036393">
    <property type="entry name" value="AceGlu_kinase-like_sf"/>
</dbReference>
<dbReference type="InterPro" id="IPR001048">
    <property type="entry name" value="Asp/Glu/Uridylate_kinase"/>
</dbReference>
<dbReference type="InterPro" id="IPR041739">
    <property type="entry name" value="G5K_ProB"/>
</dbReference>
<dbReference type="InterPro" id="IPR001057">
    <property type="entry name" value="Glu/AcGlu_kinase"/>
</dbReference>
<dbReference type="InterPro" id="IPR011529">
    <property type="entry name" value="Glu_5kinase"/>
</dbReference>
<dbReference type="InterPro" id="IPR005715">
    <property type="entry name" value="Glu_5kinase/COase_Synthase"/>
</dbReference>
<dbReference type="InterPro" id="IPR002478">
    <property type="entry name" value="PUA"/>
</dbReference>
<dbReference type="InterPro" id="IPR015947">
    <property type="entry name" value="PUA-like_sf"/>
</dbReference>
<dbReference type="InterPro" id="IPR036974">
    <property type="entry name" value="PUA_sf"/>
</dbReference>
<dbReference type="NCBIfam" id="TIGR01027">
    <property type="entry name" value="proB"/>
    <property type="match status" value="1"/>
</dbReference>
<dbReference type="PANTHER" id="PTHR43654">
    <property type="entry name" value="GLUTAMATE 5-KINASE"/>
    <property type="match status" value="1"/>
</dbReference>
<dbReference type="PANTHER" id="PTHR43654:SF1">
    <property type="entry name" value="ISOPENTENYL PHOSPHATE KINASE"/>
    <property type="match status" value="1"/>
</dbReference>
<dbReference type="Pfam" id="PF00696">
    <property type="entry name" value="AA_kinase"/>
    <property type="match status" value="1"/>
</dbReference>
<dbReference type="Pfam" id="PF01472">
    <property type="entry name" value="PUA"/>
    <property type="match status" value="1"/>
</dbReference>
<dbReference type="PIRSF" id="PIRSF000729">
    <property type="entry name" value="GK"/>
    <property type="match status" value="1"/>
</dbReference>
<dbReference type="PRINTS" id="PR00474">
    <property type="entry name" value="GLU5KINASE"/>
</dbReference>
<dbReference type="SMART" id="SM00359">
    <property type="entry name" value="PUA"/>
    <property type="match status" value="1"/>
</dbReference>
<dbReference type="SUPFAM" id="SSF53633">
    <property type="entry name" value="Carbamate kinase-like"/>
    <property type="match status" value="1"/>
</dbReference>
<dbReference type="SUPFAM" id="SSF88697">
    <property type="entry name" value="PUA domain-like"/>
    <property type="match status" value="1"/>
</dbReference>
<dbReference type="PROSITE" id="PS50890">
    <property type="entry name" value="PUA"/>
    <property type="match status" value="1"/>
</dbReference>